<accession>Q9Y5R6</accession>
<accession>B2R913</accession>
<accession>Q6T1H8</accession>
<accession>Q6T1H9</accession>
<accession>Q8IW77</accession>
<comment type="function">
    <text evidence="1">Transcription factor that plays a key role in male sex determination and differentiation by controlling testis development and male germ cell proliferation. Plays a central role in spermatogonia by inhibiting meiosis in undifferentiated spermatogonia and promoting mitosis, leading to spermatogonial development and allowing abundant and continuous production of sperm. Acts both as a transcription repressor and activator: prevents meiosis by restricting retinoic acid (RA)-dependent transcription and repressing STRA8 expression and promotes spermatogonial development by activating spermatogonial differentiation genes, such as SOHLH1. Also plays a key role in postnatal sex maintenance by maintaining testis determination and preventing feminization: represses transcription of female promoting genes such as FOXL2 and activates male-specific genes. May act as a tumor suppressor. May also play a minor role in oogenesis (By similarity).</text>
</comment>
<comment type="interaction">
    <interactant intactId="EBI-7963304">
        <id>Q9Y5R6</id>
    </interactant>
    <interactant intactId="EBI-7963304">
        <id>Q9Y5R6</id>
        <label>DMRT1</label>
    </interactant>
    <organismsDiffer>false</organismsDiffer>
    <experiments>4</experiments>
</comment>
<comment type="subcellular location">
    <subcellularLocation>
        <location evidence="3">Nucleus</location>
    </subcellularLocation>
</comment>
<comment type="alternative products">
    <event type="alternative splicing"/>
    <isoform>
        <id>Q9Y5R6-1</id>
        <name>1</name>
        <name>DMRT1a</name>
        <sequence type="displayed"/>
    </isoform>
    <isoform>
        <id>Q9Y5R6-2</id>
        <name>2</name>
        <name>DMRT1b</name>
        <sequence type="described" ref="VSP_042961 VSP_042962"/>
    </isoform>
    <isoform>
        <id>Q9Y5R6-3</id>
        <name>3</name>
        <name>DMRT1c</name>
        <sequence type="described" ref="VSP_042959 VSP_042960"/>
    </isoform>
</comment>
<comment type="tissue specificity">
    <text evidence="6 10">Testis-specific. Expressed in prostate cancer (at protein level).</text>
</comment>
<comment type="developmental stage">
    <text>Expressed in the genital ridges of six-week-old male embryos. Becomes confined to the forming seminiferous tubules (probably Sertoli cells) at seven weeks. Not detected in female embryos.</text>
</comment>
<comment type="disease" evidence="8">
    <disease id="DI-02749">
        <name>Testicular germ cell tumor</name>
        <acronym>TGCT</acronym>
        <description>A common malignancy in males representing 95% of all testicular neoplasms. TGCTs have various pathologic subtypes including: unclassified intratubular germ cell neoplasia, seminoma (including cases with syncytiotrophoblastic cells), spermatocytic seminoma, embryonal carcinoma, yolk sac tumor, choriocarcinoma, and teratoma.</description>
        <dbReference type="MIM" id="273300"/>
    </disease>
    <text>The disease may be caused by variants affecting the gene represented in this entry.</text>
</comment>
<comment type="disease" evidence="9 11 12">
    <disease id="DI-03328">
        <name>46,XY sex reversal 4</name>
        <acronym>SRXY4</acronym>
        <description>A condition characterized by male-to-female sex reversal in the presence of a normal 46,XY karyotype. Patients display complete or partial gonadal dysgenesis and a chromosome 9p deletion.</description>
        <dbReference type="MIM" id="154230"/>
    </disease>
    <text>The disease may be caused by variants affecting the gene represented in this entry.</text>
</comment>
<comment type="similarity">
    <text evidence="14">Belongs to the DMRT family.</text>
</comment>
<gene>
    <name type="primary">DMRT1</name>
    <name type="synonym">DMT1</name>
</gene>
<reference key="1">
    <citation type="journal article" date="1999" name="Hum. Mol. Genet.">
        <title>A region of human chromosome 9p required for testis development contains two genes related to known sexual regulators.</title>
        <authorList>
            <person name="Raymond C.S."/>
            <person name="Parker E.D."/>
            <person name="Kettlewell J.R."/>
            <person name="Brown L.G."/>
            <person name="Page D.C."/>
            <person name="Kusz K."/>
            <person name="Jaruzelska J."/>
            <person name="Reinberg Y."/>
            <person name="Flejter W.L."/>
            <person name="Bardwell V.J."/>
            <person name="Hirsch B."/>
            <person name="Zarkower D."/>
        </authorList>
    </citation>
    <scope>NUCLEOTIDE SEQUENCE [MRNA] (ISOFORM 1)</scope>
    <scope>VARIANTS THR-45; SER-221; SER-281 AND LEU-295</scope>
    <source>
        <tissue>Testis</tissue>
    </source>
</reference>
<reference key="2">
    <citation type="journal article" date="2000" name="Genomics">
        <title>A new submicroscopic deletion that refines the 9p region for sex reversal.</title>
        <authorList>
            <person name="Calvari V."/>
            <person name="Bertini V."/>
            <person name="De Grandi A."/>
            <person name="Peverali G."/>
            <person name="Zuffardi O."/>
            <person name="Ferguson-Smith M."/>
            <person name="Knudtzon J."/>
            <person name="Camerino G."/>
            <person name="Borsani G."/>
            <person name="Guioli S."/>
        </authorList>
    </citation>
    <scope>NUCLEOTIDE SEQUENCE [MRNA] (ISOFORM 1)</scope>
    <scope>VARIANT THR-45</scope>
    <scope>TISSUE SPECIFICITY</scope>
    <source>
        <tissue>Testis</tissue>
    </source>
</reference>
<reference key="3">
    <citation type="journal article" date="2006" name="Cell Res.">
        <title>Transcriptional diversity of DMRT1 (dsx- and mab3-related transcription factor 1) in human testis.</title>
        <authorList>
            <person name="Cheng H.H."/>
            <person name="Ying M."/>
            <person name="Tian Y.H."/>
            <person name="Guo Y."/>
            <person name="McElreavey K."/>
            <person name="Zhou R.J."/>
        </authorList>
    </citation>
    <scope>NUCLEOTIDE SEQUENCE [MRNA] (ISOFORMS 1; 2 AND 3)</scope>
    <scope>VARIANT THR-45</scope>
</reference>
<reference key="4">
    <citation type="journal article" date="2004" name="Nat. Genet.">
        <title>Complete sequencing and characterization of 21,243 full-length human cDNAs.</title>
        <authorList>
            <person name="Ota T."/>
            <person name="Suzuki Y."/>
            <person name="Nishikawa T."/>
            <person name="Otsuki T."/>
            <person name="Sugiyama T."/>
            <person name="Irie R."/>
            <person name="Wakamatsu A."/>
            <person name="Hayashi K."/>
            <person name="Sato H."/>
            <person name="Nagai K."/>
            <person name="Kimura K."/>
            <person name="Makita H."/>
            <person name="Sekine M."/>
            <person name="Obayashi M."/>
            <person name="Nishi T."/>
            <person name="Shibahara T."/>
            <person name="Tanaka T."/>
            <person name="Ishii S."/>
            <person name="Yamamoto J."/>
            <person name="Saito K."/>
            <person name="Kawai Y."/>
            <person name="Isono Y."/>
            <person name="Nakamura Y."/>
            <person name="Nagahari K."/>
            <person name="Murakami K."/>
            <person name="Yasuda T."/>
            <person name="Iwayanagi T."/>
            <person name="Wagatsuma M."/>
            <person name="Shiratori A."/>
            <person name="Sudo H."/>
            <person name="Hosoiri T."/>
            <person name="Kaku Y."/>
            <person name="Kodaira H."/>
            <person name="Kondo H."/>
            <person name="Sugawara M."/>
            <person name="Takahashi M."/>
            <person name="Kanda K."/>
            <person name="Yokoi T."/>
            <person name="Furuya T."/>
            <person name="Kikkawa E."/>
            <person name="Omura Y."/>
            <person name="Abe K."/>
            <person name="Kamihara K."/>
            <person name="Katsuta N."/>
            <person name="Sato K."/>
            <person name="Tanikawa M."/>
            <person name="Yamazaki M."/>
            <person name="Ninomiya K."/>
            <person name="Ishibashi T."/>
            <person name="Yamashita H."/>
            <person name="Murakawa K."/>
            <person name="Fujimori K."/>
            <person name="Tanai H."/>
            <person name="Kimata M."/>
            <person name="Watanabe M."/>
            <person name="Hiraoka S."/>
            <person name="Chiba Y."/>
            <person name="Ishida S."/>
            <person name="Ono Y."/>
            <person name="Takiguchi S."/>
            <person name="Watanabe S."/>
            <person name="Yosida M."/>
            <person name="Hotuta T."/>
            <person name="Kusano J."/>
            <person name="Kanehori K."/>
            <person name="Takahashi-Fujii A."/>
            <person name="Hara H."/>
            <person name="Tanase T.-O."/>
            <person name="Nomura Y."/>
            <person name="Togiya S."/>
            <person name="Komai F."/>
            <person name="Hara R."/>
            <person name="Takeuchi K."/>
            <person name="Arita M."/>
            <person name="Imose N."/>
            <person name="Musashino K."/>
            <person name="Yuuki H."/>
            <person name="Oshima A."/>
            <person name="Sasaki N."/>
            <person name="Aotsuka S."/>
            <person name="Yoshikawa Y."/>
            <person name="Matsunawa H."/>
            <person name="Ichihara T."/>
            <person name="Shiohata N."/>
            <person name="Sano S."/>
            <person name="Moriya S."/>
            <person name="Momiyama H."/>
            <person name="Satoh N."/>
            <person name="Takami S."/>
            <person name="Terashima Y."/>
            <person name="Suzuki O."/>
            <person name="Nakagawa S."/>
            <person name="Senoh A."/>
            <person name="Mizoguchi H."/>
            <person name="Goto Y."/>
            <person name="Shimizu F."/>
            <person name="Wakebe H."/>
            <person name="Hishigaki H."/>
            <person name="Watanabe T."/>
            <person name="Sugiyama A."/>
            <person name="Takemoto M."/>
            <person name="Kawakami B."/>
            <person name="Yamazaki M."/>
            <person name="Watanabe K."/>
            <person name="Kumagai A."/>
            <person name="Itakura S."/>
            <person name="Fukuzumi Y."/>
            <person name="Fujimori Y."/>
            <person name="Komiyama M."/>
            <person name="Tashiro H."/>
            <person name="Tanigami A."/>
            <person name="Fujiwara T."/>
            <person name="Ono T."/>
            <person name="Yamada K."/>
            <person name="Fujii Y."/>
            <person name="Ozaki K."/>
            <person name="Hirao M."/>
            <person name="Ohmori Y."/>
            <person name="Kawabata A."/>
            <person name="Hikiji T."/>
            <person name="Kobatake N."/>
            <person name="Inagaki H."/>
            <person name="Ikema Y."/>
            <person name="Okamoto S."/>
            <person name="Okitani R."/>
            <person name="Kawakami T."/>
            <person name="Noguchi S."/>
            <person name="Itoh T."/>
            <person name="Shigeta K."/>
            <person name="Senba T."/>
            <person name="Matsumura K."/>
            <person name="Nakajima Y."/>
            <person name="Mizuno T."/>
            <person name="Morinaga M."/>
            <person name="Sasaki M."/>
            <person name="Togashi T."/>
            <person name="Oyama M."/>
            <person name="Hata H."/>
            <person name="Watanabe M."/>
            <person name="Komatsu T."/>
            <person name="Mizushima-Sugano J."/>
            <person name="Satoh T."/>
            <person name="Shirai Y."/>
            <person name="Takahashi Y."/>
            <person name="Nakagawa K."/>
            <person name="Okumura K."/>
            <person name="Nagase T."/>
            <person name="Nomura N."/>
            <person name="Kikuchi H."/>
            <person name="Masuho Y."/>
            <person name="Yamashita R."/>
            <person name="Nakai K."/>
            <person name="Yada T."/>
            <person name="Nakamura Y."/>
            <person name="Ohara O."/>
            <person name="Isogai T."/>
            <person name="Sugano S."/>
        </authorList>
    </citation>
    <scope>NUCLEOTIDE SEQUENCE [LARGE SCALE MRNA]</scope>
    <source>
        <tissue>Testis</tissue>
    </source>
</reference>
<reference key="5">
    <citation type="journal article" date="2004" name="Nature">
        <title>DNA sequence and analysis of human chromosome 9.</title>
        <authorList>
            <person name="Humphray S.J."/>
            <person name="Oliver K."/>
            <person name="Hunt A.R."/>
            <person name="Plumb R.W."/>
            <person name="Loveland J.E."/>
            <person name="Howe K.L."/>
            <person name="Andrews T.D."/>
            <person name="Searle S."/>
            <person name="Hunt S.E."/>
            <person name="Scott C.E."/>
            <person name="Jones M.C."/>
            <person name="Ainscough R."/>
            <person name="Almeida J.P."/>
            <person name="Ambrose K.D."/>
            <person name="Ashwell R.I.S."/>
            <person name="Babbage A.K."/>
            <person name="Babbage S."/>
            <person name="Bagguley C.L."/>
            <person name="Bailey J."/>
            <person name="Banerjee R."/>
            <person name="Barker D.J."/>
            <person name="Barlow K.F."/>
            <person name="Bates K."/>
            <person name="Beasley H."/>
            <person name="Beasley O."/>
            <person name="Bird C.P."/>
            <person name="Bray-Allen S."/>
            <person name="Brown A.J."/>
            <person name="Brown J.Y."/>
            <person name="Burford D."/>
            <person name="Burrill W."/>
            <person name="Burton J."/>
            <person name="Carder C."/>
            <person name="Carter N.P."/>
            <person name="Chapman J.C."/>
            <person name="Chen Y."/>
            <person name="Clarke G."/>
            <person name="Clark S.Y."/>
            <person name="Clee C.M."/>
            <person name="Clegg S."/>
            <person name="Collier R.E."/>
            <person name="Corby N."/>
            <person name="Crosier M."/>
            <person name="Cummings A.T."/>
            <person name="Davies J."/>
            <person name="Dhami P."/>
            <person name="Dunn M."/>
            <person name="Dutta I."/>
            <person name="Dyer L.W."/>
            <person name="Earthrowl M.E."/>
            <person name="Faulkner L."/>
            <person name="Fleming C.J."/>
            <person name="Frankish A."/>
            <person name="Frankland J.A."/>
            <person name="French L."/>
            <person name="Fricker D.G."/>
            <person name="Garner P."/>
            <person name="Garnett J."/>
            <person name="Ghori J."/>
            <person name="Gilbert J.G.R."/>
            <person name="Glison C."/>
            <person name="Grafham D.V."/>
            <person name="Gribble S."/>
            <person name="Griffiths C."/>
            <person name="Griffiths-Jones S."/>
            <person name="Grocock R."/>
            <person name="Guy J."/>
            <person name="Hall R.E."/>
            <person name="Hammond S."/>
            <person name="Harley J.L."/>
            <person name="Harrison E.S.I."/>
            <person name="Hart E.A."/>
            <person name="Heath P.D."/>
            <person name="Henderson C.D."/>
            <person name="Hopkins B.L."/>
            <person name="Howard P.J."/>
            <person name="Howden P.J."/>
            <person name="Huckle E."/>
            <person name="Johnson C."/>
            <person name="Johnson D."/>
            <person name="Joy A.A."/>
            <person name="Kay M."/>
            <person name="Keenan S."/>
            <person name="Kershaw J.K."/>
            <person name="Kimberley A.M."/>
            <person name="King A."/>
            <person name="Knights A."/>
            <person name="Laird G.K."/>
            <person name="Langford C."/>
            <person name="Lawlor S."/>
            <person name="Leongamornlert D.A."/>
            <person name="Leversha M."/>
            <person name="Lloyd C."/>
            <person name="Lloyd D.M."/>
            <person name="Lovell J."/>
            <person name="Martin S."/>
            <person name="Mashreghi-Mohammadi M."/>
            <person name="Matthews L."/>
            <person name="McLaren S."/>
            <person name="McLay K.E."/>
            <person name="McMurray A."/>
            <person name="Milne S."/>
            <person name="Nickerson T."/>
            <person name="Nisbett J."/>
            <person name="Nordsiek G."/>
            <person name="Pearce A.V."/>
            <person name="Peck A.I."/>
            <person name="Porter K.M."/>
            <person name="Pandian R."/>
            <person name="Pelan S."/>
            <person name="Phillimore B."/>
            <person name="Povey S."/>
            <person name="Ramsey Y."/>
            <person name="Rand V."/>
            <person name="Scharfe M."/>
            <person name="Sehra H.K."/>
            <person name="Shownkeen R."/>
            <person name="Sims S.K."/>
            <person name="Skuce C.D."/>
            <person name="Smith M."/>
            <person name="Steward C.A."/>
            <person name="Swarbreck D."/>
            <person name="Sycamore N."/>
            <person name="Tester J."/>
            <person name="Thorpe A."/>
            <person name="Tracey A."/>
            <person name="Tromans A."/>
            <person name="Thomas D.W."/>
            <person name="Wall M."/>
            <person name="Wallis J.M."/>
            <person name="West A.P."/>
            <person name="Whitehead S.L."/>
            <person name="Willey D.L."/>
            <person name="Williams S.A."/>
            <person name="Wilming L."/>
            <person name="Wray P.W."/>
            <person name="Young L."/>
            <person name="Ashurst J.L."/>
            <person name="Coulson A."/>
            <person name="Blocker H."/>
            <person name="Durbin R.M."/>
            <person name="Sulston J.E."/>
            <person name="Hubbard T."/>
            <person name="Jackson M.J."/>
            <person name="Bentley D.R."/>
            <person name="Beck S."/>
            <person name="Rogers J."/>
            <person name="Dunham I."/>
        </authorList>
    </citation>
    <scope>NUCLEOTIDE SEQUENCE [LARGE SCALE GENOMIC DNA]</scope>
</reference>
<reference key="6">
    <citation type="submission" date="2005-09" db="EMBL/GenBank/DDBJ databases">
        <authorList>
            <person name="Mural R.J."/>
            <person name="Istrail S."/>
            <person name="Sutton G.G."/>
            <person name="Florea L."/>
            <person name="Halpern A.L."/>
            <person name="Mobarry C.M."/>
            <person name="Lippert R."/>
            <person name="Walenz B."/>
            <person name="Shatkay H."/>
            <person name="Dew I."/>
            <person name="Miller J.R."/>
            <person name="Flanigan M.J."/>
            <person name="Edwards N.J."/>
            <person name="Bolanos R."/>
            <person name="Fasulo D."/>
            <person name="Halldorsson B.V."/>
            <person name="Hannenhalli S."/>
            <person name="Turner R."/>
            <person name="Yooseph S."/>
            <person name="Lu F."/>
            <person name="Nusskern D.R."/>
            <person name="Shue B.C."/>
            <person name="Zheng X.H."/>
            <person name="Zhong F."/>
            <person name="Delcher A.L."/>
            <person name="Huson D.H."/>
            <person name="Kravitz S.A."/>
            <person name="Mouchard L."/>
            <person name="Reinert K."/>
            <person name="Remington K.A."/>
            <person name="Clark A.G."/>
            <person name="Waterman M.S."/>
            <person name="Eichler E.E."/>
            <person name="Adams M.D."/>
            <person name="Hunkapiller M.W."/>
            <person name="Myers E.W."/>
            <person name="Venter J.C."/>
        </authorList>
    </citation>
    <scope>NUCLEOTIDE SEQUENCE [LARGE SCALE GENOMIC DNA]</scope>
</reference>
<reference key="7">
    <citation type="journal article" date="2004" name="Genome Res.">
        <title>The status, quality, and expansion of the NIH full-length cDNA project: the Mammalian Gene Collection (MGC).</title>
        <authorList>
            <consortium name="The MGC Project Team"/>
        </authorList>
    </citation>
    <scope>NUCLEOTIDE SEQUENCE [LARGE SCALE MRNA] (ISOFORM 1)</scope>
    <source>
        <tissue>Brain</tissue>
    </source>
</reference>
<reference key="8">
    <citation type="journal article" date="1998" name="Am. J. Hum. Genet.">
        <title>A gene involved in XY sex reversal is located on chromosome 9, distal to marker D9S1779.</title>
        <authorList>
            <person name="Flejter W.L."/>
            <person name="Fergestad J."/>
            <person name="Gorski J."/>
            <person name="Varvill T."/>
            <person name="Chandrasekharappa S."/>
        </authorList>
    </citation>
    <scope>POSSIBLE INVOLVEMENT IN SRXY4</scope>
</reference>
<reference key="9">
    <citation type="journal article" date="1998" name="Nature">
        <title>Evidence for evolutionary conservation of sex-determining genes.</title>
        <authorList>
            <person name="Raymond C.S."/>
            <person name="Shamu C.E."/>
            <person name="Shen M.M."/>
            <person name="Seifert K.J."/>
            <person name="Hirsch B."/>
            <person name="Hodgkin J."/>
            <person name="Zarkower D."/>
        </authorList>
    </citation>
    <scope>POSSIBLE INVOLVEMENT IN SRXY4</scope>
</reference>
<reference key="10">
    <citation type="journal article" date="2010" name="Nat. Genet.">
        <title>Variants near DMRT1, TERT and ATF7IP are associated with testicular germ cell cancer.</title>
        <authorList>
            <person name="Turnbull C."/>
            <person name="Rapley E.A."/>
            <person name="Seal S."/>
            <person name="Pernet D."/>
            <person name="Renwick A."/>
            <person name="Hughes D."/>
            <person name="Ricketts M."/>
            <person name="Linger R."/>
            <person name="Nsengimana J."/>
            <person name="Deloukas P."/>
            <person name="Huddart R.A."/>
            <person name="Bishop D.T."/>
            <person name="Easton D.F."/>
            <person name="Stratton M.R."/>
            <person name="Rahman N."/>
        </authorList>
    </citation>
    <scope>POSSIBLE INVOLVEMENT IN TGCT</scope>
</reference>
<reference key="11">
    <citation type="journal article" date="2010" name="PLoS ONE">
        <title>Identification of de novo copy number variants associated with human disorders of sexual development.</title>
        <authorList>
            <person name="Tannour-Louet M."/>
            <person name="Han S."/>
            <person name="Corbett S.T."/>
            <person name="Louet J.F."/>
            <person name="Yatsenko S."/>
            <person name="Meyers L."/>
            <person name="Shaw C.A."/>
            <person name="Kang S.H."/>
            <person name="Cheung S.W."/>
            <person name="Lamb D.J."/>
        </authorList>
    </citation>
    <scope>POSSIBLE INVOLVEMENT IN SRXY4</scope>
</reference>
<reference key="12">
    <citation type="journal article" date="2013" name="Proteomics">
        <title>Scanning of novel cancer/testis proteins by human testis proteomic analysis.</title>
        <authorList>
            <person name="Liu M."/>
            <person name="Hu Z."/>
            <person name="Qi L."/>
            <person name="Wang J."/>
            <person name="Zhou T."/>
            <person name="Guo Y."/>
            <person name="Zeng Y."/>
            <person name="Zheng B."/>
            <person name="Wu Y."/>
            <person name="Zhang P."/>
            <person name="Chen X."/>
            <person name="Tu W."/>
            <person name="Zhang T."/>
            <person name="Zhou Q."/>
            <person name="Jiang M."/>
            <person name="Guo X."/>
            <person name="Zhou Z."/>
            <person name="Sha J."/>
        </authorList>
    </citation>
    <scope>TISSUE SPECIFICITY</scope>
</reference>
<organism>
    <name type="scientific">Homo sapiens</name>
    <name type="common">Human</name>
    <dbReference type="NCBI Taxonomy" id="9606"/>
    <lineage>
        <taxon>Eukaryota</taxon>
        <taxon>Metazoa</taxon>
        <taxon>Chordata</taxon>
        <taxon>Craniata</taxon>
        <taxon>Vertebrata</taxon>
        <taxon>Euteleostomi</taxon>
        <taxon>Mammalia</taxon>
        <taxon>Eutheria</taxon>
        <taxon>Euarchontoglires</taxon>
        <taxon>Primates</taxon>
        <taxon>Haplorrhini</taxon>
        <taxon>Catarrhini</taxon>
        <taxon>Hominidae</taxon>
        <taxon>Homo</taxon>
    </lineage>
</organism>
<proteinExistence type="evidence at protein level"/>
<sequence length="373" mass="39473">MPNDEAFSKPSTPSEAPHAPGVPPQGRAGGFGKASGALVGAASGSSAGGSSRGGGSGSGASDLGAGSKKSPRLPKCARCRNHGYASPLKGHKRFCMWRDCQCKKCNLIAERQRVMAAQVALRRQQAQEEELGISHPIPLPSAAELLVKRENNGSNPCLMTECSGTSQPPPASVPTTAASEGRMVIQDIPAVTSRGHVENTPDLVSDSTYYSSFYQPSLFPYYNNLYNCPQYSMALAADSASGEVGNPLGGSPVKNSLRGLPGPYVPGQTGNQWQMKNMENRHAMSSQYRMHSYYPPPSYLGQSVPQFFTFEDAPSYPEARASVFSPPSSQDSGLVSLSSSSPISNKSTKAVLECEPASEPSSFTVTPVIEEDE</sequence>
<name>DMRT1_HUMAN</name>
<keyword id="KW-0002">3D-structure</keyword>
<keyword id="KW-0025">Alternative splicing</keyword>
<keyword id="KW-0217">Developmental protein</keyword>
<keyword id="KW-0221">Differentiation</keyword>
<keyword id="KW-0238">DNA-binding</keyword>
<keyword id="KW-0479">Metal-binding</keyword>
<keyword id="KW-0539">Nucleus</keyword>
<keyword id="KW-0597">Phosphoprotein</keyword>
<keyword id="KW-1267">Proteomics identification</keyword>
<keyword id="KW-1185">Reference proteome</keyword>
<keyword id="KW-0726">Sexual differentiation</keyword>
<keyword id="KW-0804">Transcription</keyword>
<keyword id="KW-0805">Transcription regulation</keyword>
<keyword id="KW-0862">Zinc</keyword>
<protein>
    <recommendedName>
        <fullName>Doublesex- and mab-3-related transcription factor 1</fullName>
    </recommendedName>
    <alternativeName>
        <fullName>DM domain expressed in testis protein 1</fullName>
    </alternativeName>
</protein>
<evidence type="ECO:0000250" key="1"/>
<evidence type="ECO:0000250" key="2">
    <source>
        <dbReference type="UniProtKB" id="Q9QZ59"/>
    </source>
</evidence>
<evidence type="ECO:0000255" key="3">
    <source>
        <dbReference type="PROSITE-ProRule" id="PRU00070"/>
    </source>
</evidence>
<evidence type="ECO:0000256" key="4">
    <source>
        <dbReference type="SAM" id="MobiDB-lite"/>
    </source>
</evidence>
<evidence type="ECO:0000269" key="5">
    <source>
    </source>
</evidence>
<evidence type="ECO:0000269" key="6">
    <source>
    </source>
</evidence>
<evidence type="ECO:0000269" key="7">
    <source>
    </source>
</evidence>
<evidence type="ECO:0000269" key="8">
    <source>
    </source>
</evidence>
<evidence type="ECO:0000269" key="9">
    <source>
    </source>
</evidence>
<evidence type="ECO:0000269" key="10">
    <source>
    </source>
</evidence>
<evidence type="ECO:0000269" key="11">
    <source>
    </source>
</evidence>
<evidence type="ECO:0000269" key="12">
    <source>
    </source>
</evidence>
<evidence type="ECO:0000303" key="13">
    <source>
    </source>
</evidence>
<evidence type="ECO:0000305" key="14"/>
<feature type="chain" id="PRO_0000207042" description="Doublesex- and mab-3-related transcription factor 1">
    <location>
        <begin position="1"/>
        <end position="373"/>
    </location>
</feature>
<feature type="DNA-binding region" description="DM" evidence="3">
    <location>
        <begin position="72"/>
        <end position="118"/>
    </location>
</feature>
<feature type="region of interest" description="Disordered" evidence="4">
    <location>
        <begin position="1"/>
        <end position="72"/>
    </location>
</feature>
<feature type="region of interest" description="Disordered" evidence="4">
    <location>
        <begin position="319"/>
        <end position="373"/>
    </location>
</feature>
<feature type="compositionally biased region" description="Low complexity" evidence="4">
    <location>
        <begin position="34"/>
        <end position="45"/>
    </location>
</feature>
<feature type="compositionally biased region" description="Gly residues" evidence="4">
    <location>
        <begin position="46"/>
        <end position="58"/>
    </location>
</feature>
<feature type="compositionally biased region" description="Low complexity" evidence="4">
    <location>
        <begin position="59"/>
        <end position="68"/>
    </location>
</feature>
<feature type="compositionally biased region" description="Low complexity" evidence="4">
    <location>
        <begin position="328"/>
        <end position="347"/>
    </location>
</feature>
<feature type="modified residue" description="Phosphoserine" evidence="2">
    <location>
        <position position="339"/>
    </location>
</feature>
<feature type="splice variant" id="VSP_042959" description="In isoform 3." evidence="13">
    <original>ALRRQQAQEEELGISHPIPLPSAAELLVKRENNGSNPCLMTECSGTSQPPPASVPT</original>
    <variation>GAGVREPGFSLSFFFFFFFFRWSLARLPRLQCSGAILAHCNSASRVQAILLPQPPK</variation>
    <location>
        <begin position="120"/>
        <end position="175"/>
    </location>
</feature>
<feature type="splice variant" id="VSP_042960" description="In isoform 3." evidence="13">
    <location>
        <begin position="176"/>
        <end position="373"/>
    </location>
</feature>
<feature type="splice variant" id="VSP_042961" description="In isoform 2." evidence="13">
    <original>M</original>
    <variation>V</variation>
    <location>
        <position position="275"/>
    </location>
</feature>
<feature type="splice variant" id="VSP_042962" description="In isoform 2." evidence="13">
    <location>
        <begin position="276"/>
        <end position="373"/>
    </location>
</feature>
<feature type="sequence variant" id="VAR_009954" description="In dbSNP:rs3739583." evidence="5 6 7">
    <original>S</original>
    <variation>T</variation>
    <location>
        <position position="45"/>
    </location>
</feature>
<feature type="sequence variant" id="VAR_009955" evidence="5">
    <original>Y</original>
    <variation>S</variation>
    <location>
        <position position="221"/>
    </location>
</feature>
<feature type="sequence variant" id="VAR_009956" description="In dbSNP:rs376670316." evidence="5">
    <original>R</original>
    <variation>S</variation>
    <location>
        <position position="281"/>
    </location>
</feature>
<feature type="sequence variant" id="VAR_009957" description="In dbSNP:rs902482318." evidence="5">
    <original>P</original>
    <variation>L</variation>
    <location>
        <position position="295"/>
    </location>
</feature>
<dbReference type="EMBL" id="AF130728">
    <property type="protein sequence ID" value="AAD40474.1"/>
    <property type="molecule type" value="mRNA"/>
</dbReference>
<dbReference type="EMBL" id="AL162131">
    <property type="protein sequence ID" value="CAB82427.1"/>
    <property type="molecule type" value="mRNA"/>
</dbReference>
<dbReference type="EMBL" id="AY442914">
    <property type="protein sequence ID" value="AAR89619.1"/>
    <property type="molecule type" value="mRNA"/>
</dbReference>
<dbReference type="EMBL" id="AY442915">
    <property type="protein sequence ID" value="AAR89620.1"/>
    <property type="molecule type" value="mRNA"/>
</dbReference>
<dbReference type="EMBL" id="AK313594">
    <property type="protein sequence ID" value="BAG36360.1"/>
    <property type="molecule type" value="mRNA"/>
</dbReference>
<dbReference type="EMBL" id="AJ276801">
    <property type="protein sequence ID" value="CAB82851.1"/>
    <property type="molecule type" value="mRNA"/>
</dbReference>
<dbReference type="EMBL" id="AL136365">
    <property type="status" value="NOT_ANNOTATED_CDS"/>
    <property type="molecule type" value="Genomic_DNA"/>
</dbReference>
<dbReference type="EMBL" id="CH471071">
    <property type="protein sequence ID" value="EAW58820.1"/>
    <property type="molecule type" value="Genomic_DNA"/>
</dbReference>
<dbReference type="EMBL" id="BC040847">
    <property type="protein sequence ID" value="AAH40847.1"/>
    <property type="molecule type" value="mRNA"/>
</dbReference>
<dbReference type="CCDS" id="CCDS6442.1">
    <molecule id="Q9Y5R6-1"/>
</dbReference>
<dbReference type="RefSeq" id="NP_068770.2">
    <molecule id="Q9Y5R6-1"/>
    <property type="nucleotide sequence ID" value="NM_021951.3"/>
</dbReference>
<dbReference type="PDB" id="4YJ0">
    <property type="method" value="X-ray"/>
    <property type="resolution" value="3.81 A"/>
    <property type="chains" value="A/B/C=70-131"/>
</dbReference>
<dbReference type="PDBsum" id="4YJ0"/>
<dbReference type="SMR" id="Q9Y5R6"/>
<dbReference type="BioGRID" id="108101">
    <property type="interactions" value="7"/>
</dbReference>
<dbReference type="DIP" id="DIP-58084N"/>
<dbReference type="FunCoup" id="Q9Y5R6">
    <property type="interactions" value="696"/>
</dbReference>
<dbReference type="IntAct" id="Q9Y5R6">
    <property type="interactions" value="6"/>
</dbReference>
<dbReference type="MINT" id="Q9Y5R6"/>
<dbReference type="STRING" id="9606.ENSP00000371711"/>
<dbReference type="iPTMnet" id="Q9Y5R6"/>
<dbReference type="PhosphoSitePlus" id="Q9Y5R6"/>
<dbReference type="BioMuta" id="DMRT1"/>
<dbReference type="DMDM" id="83305820"/>
<dbReference type="MassIVE" id="Q9Y5R6"/>
<dbReference type="PaxDb" id="9606-ENSP00000371711"/>
<dbReference type="PeptideAtlas" id="Q9Y5R6"/>
<dbReference type="ProteomicsDB" id="86485">
    <molecule id="Q9Y5R6-1"/>
</dbReference>
<dbReference type="ProteomicsDB" id="86486">
    <molecule id="Q9Y5R6-2"/>
</dbReference>
<dbReference type="ProteomicsDB" id="86487">
    <molecule id="Q9Y5R6-3"/>
</dbReference>
<dbReference type="Antibodypedia" id="23777">
    <property type="antibodies" value="327 antibodies from 26 providers"/>
</dbReference>
<dbReference type="DNASU" id="1761"/>
<dbReference type="Ensembl" id="ENST00000382276.8">
    <molecule id="Q9Y5R6-1"/>
    <property type="protein sequence ID" value="ENSP00000371711.3"/>
    <property type="gene ID" value="ENSG00000137090.12"/>
</dbReference>
<dbReference type="GeneID" id="1761"/>
<dbReference type="KEGG" id="hsa:1761"/>
<dbReference type="MANE-Select" id="ENST00000382276.8">
    <property type="protein sequence ID" value="ENSP00000371711.3"/>
    <property type="RefSeq nucleotide sequence ID" value="NM_021951.3"/>
    <property type="RefSeq protein sequence ID" value="NP_068770.2"/>
</dbReference>
<dbReference type="UCSC" id="uc003zgv.5">
    <molecule id="Q9Y5R6-1"/>
    <property type="organism name" value="human"/>
</dbReference>
<dbReference type="AGR" id="HGNC:2934"/>
<dbReference type="CTD" id="1761"/>
<dbReference type="DisGeNET" id="1761"/>
<dbReference type="GeneCards" id="DMRT1"/>
<dbReference type="GeneReviews" id="DMRT1"/>
<dbReference type="HGNC" id="HGNC:2934">
    <property type="gene designation" value="DMRT1"/>
</dbReference>
<dbReference type="HPA" id="ENSG00000137090">
    <property type="expression patterns" value="Tissue enriched (testis)"/>
</dbReference>
<dbReference type="MalaCards" id="DMRT1"/>
<dbReference type="MIM" id="154230">
    <property type="type" value="phenotype"/>
</dbReference>
<dbReference type="MIM" id="273300">
    <property type="type" value="phenotype"/>
</dbReference>
<dbReference type="MIM" id="602424">
    <property type="type" value="gene"/>
</dbReference>
<dbReference type="neXtProt" id="NX_Q9Y5R6"/>
<dbReference type="OpenTargets" id="ENSG00000137090"/>
<dbReference type="Orphanet" id="242">
    <property type="disease" value="46,XY complete gonadal dysgenesis"/>
</dbReference>
<dbReference type="PharmGKB" id="PA27381"/>
<dbReference type="VEuPathDB" id="HostDB:ENSG00000137090"/>
<dbReference type="eggNOG" id="KOG3815">
    <property type="taxonomic scope" value="Eukaryota"/>
</dbReference>
<dbReference type="GeneTree" id="ENSGT00940000156489"/>
<dbReference type="HOGENOM" id="CLU_069148_0_0_1"/>
<dbReference type="InParanoid" id="Q9Y5R6"/>
<dbReference type="OMA" id="CLMTECS"/>
<dbReference type="OrthoDB" id="9946337at2759"/>
<dbReference type="PAN-GO" id="Q9Y5R6">
    <property type="GO annotations" value="6 GO annotations based on evolutionary models"/>
</dbReference>
<dbReference type="PhylomeDB" id="Q9Y5R6"/>
<dbReference type="TreeFam" id="TF317837"/>
<dbReference type="PathwayCommons" id="Q9Y5R6"/>
<dbReference type="Reactome" id="R-HSA-9690406">
    <property type="pathway name" value="Transcriptional regulation of testis differentiation"/>
</dbReference>
<dbReference type="SignaLink" id="Q9Y5R6"/>
<dbReference type="BioGRID-ORCS" id="1761">
    <property type="hits" value="7 hits in 1162 CRISPR screens"/>
</dbReference>
<dbReference type="EvolutionaryTrace" id="Q9Y5R6"/>
<dbReference type="GeneWiki" id="DMRT1"/>
<dbReference type="GenomeRNAi" id="1761"/>
<dbReference type="Pharos" id="Q9Y5R6">
    <property type="development level" value="Tbio"/>
</dbReference>
<dbReference type="PRO" id="PR:Q9Y5R6"/>
<dbReference type="Proteomes" id="UP000005640">
    <property type="component" value="Chromosome 9"/>
</dbReference>
<dbReference type="RNAct" id="Q9Y5R6">
    <property type="molecule type" value="protein"/>
</dbReference>
<dbReference type="Bgee" id="ENSG00000137090">
    <property type="expression patterns" value="Expressed in primordial germ cell in gonad and 28 other cell types or tissues"/>
</dbReference>
<dbReference type="ExpressionAtlas" id="Q9Y5R6">
    <property type="expression patterns" value="baseline and differential"/>
</dbReference>
<dbReference type="GO" id="GO:0000785">
    <property type="term" value="C:chromatin"/>
    <property type="evidence" value="ECO:0000247"/>
    <property type="project" value="NTNU_SB"/>
</dbReference>
<dbReference type="GO" id="GO:0005737">
    <property type="term" value="C:cytoplasm"/>
    <property type="evidence" value="ECO:0007669"/>
    <property type="project" value="Ensembl"/>
</dbReference>
<dbReference type="GO" id="GO:0001674">
    <property type="term" value="C:female germ cell nucleus"/>
    <property type="evidence" value="ECO:0007669"/>
    <property type="project" value="Ensembl"/>
</dbReference>
<dbReference type="GO" id="GO:0005634">
    <property type="term" value="C:nucleus"/>
    <property type="evidence" value="ECO:0000314"/>
    <property type="project" value="UniProtKB"/>
</dbReference>
<dbReference type="GO" id="GO:0003682">
    <property type="term" value="F:chromatin binding"/>
    <property type="evidence" value="ECO:0007669"/>
    <property type="project" value="Ensembl"/>
</dbReference>
<dbReference type="GO" id="GO:0000987">
    <property type="term" value="F:cis-regulatory region sequence-specific DNA binding"/>
    <property type="evidence" value="ECO:0000250"/>
    <property type="project" value="UniProtKB"/>
</dbReference>
<dbReference type="GO" id="GO:0001228">
    <property type="term" value="F:DNA-binding transcription activator activity, RNA polymerase II-specific"/>
    <property type="evidence" value="ECO:0007669"/>
    <property type="project" value="Ensembl"/>
</dbReference>
<dbReference type="GO" id="GO:0000981">
    <property type="term" value="F:DNA-binding transcription factor activity, RNA polymerase II-specific"/>
    <property type="evidence" value="ECO:0000247"/>
    <property type="project" value="NTNU_SB"/>
</dbReference>
<dbReference type="GO" id="GO:0042802">
    <property type="term" value="F:identical protein binding"/>
    <property type="evidence" value="ECO:0000353"/>
    <property type="project" value="IntAct"/>
</dbReference>
<dbReference type="GO" id="GO:0046872">
    <property type="term" value="F:metal ion binding"/>
    <property type="evidence" value="ECO:0007669"/>
    <property type="project" value="UniProtKB-KW"/>
</dbReference>
<dbReference type="GO" id="GO:0000978">
    <property type="term" value="F:RNA polymerase II cis-regulatory region sequence-specific DNA binding"/>
    <property type="evidence" value="ECO:0000318"/>
    <property type="project" value="GO_Central"/>
</dbReference>
<dbReference type="GO" id="GO:1990837">
    <property type="term" value="F:sequence-specific double-stranded DNA binding"/>
    <property type="evidence" value="ECO:0000314"/>
    <property type="project" value="ARUK-UCL"/>
</dbReference>
<dbReference type="GO" id="GO:0000902">
    <property type="term" value="P:cell morphogenesis"/>
    <property type="evidence" value="ECO:0007669"/>
    <property type="project" value="Ensembl"/>
</dbReference>
<dbReference type="GO" id="GO:0008354">
    <property type="term" value="P:germ cell migration"/>
    <property type="evidence" value="ECO:0007669"/>
    <property type="project" value="Ensembl"/>
</dbReference>
<dbReference type="GO" id="GO:0035556">
    <property type="term" value="P:intracellular signal transduction"/>
    <property type="evidence" value="ECO:0007669"/>
    <property type="project" value="Ensembl"/>
</dbReference>
<dbReference type="GO" id="GO:0002176">
    <property type="term" value="P:male germ cell proliferation"/>
    <property type="evidence" value="ECO:0000250"/>
    <property type="project" value="UniProtKB"/>
</dbReference>
<dbReference type="GO" id="GO:0030238">
    <property type="term" value="P:male sex determination"/>
    <property type="evidence" value="ECO:0000250"/>
    <property type="project" value="UniProtKB"/>
</dbReference>
<dbReference type="GO" id="GO:0046661">
    <property type="term" value="P:male sex differentiation"/>
    <property type="evidence" value="ECO:0000250"/>
    <property type="project" value="UniProtKB"/>
</dbReference>
<dbReference type="GO" id="GO:0007127">
    <property type="term" value="P:meiosis I"/>
    <property type="evidence" value="ECO:0007669"/>
    <property type="project" value="Ensembl"/>
</dbReference>
<dbReference type="GO" id="GO:0045835">
    <property type="term" value="P:negative regulation of meiotic nuclear division"/>
    <property type="evidence" value="ECO:0000250"/>
    <property type="project" value="UniProtKB"/>
</dbReference>
<dbReference type="GO" id="GO:0000122">
    <property type="term" value="P:negative regulation of transcription by RNA polymerase II"/>
    <property type="evidence" value="ECO:0000250"/>
    <property type="project" value="UniProtKB"/>
</dbReference>
<dbReference type="GO" id="GO:0048599">
    <property type="term" value="P:oocyte development"/>
    <property type="evidence" value="ECO:0007669"/>
    <property type="project" value="Ensembl"/>
</dbReference>
<dbReference type="GO" id="GO:2000020">
    <property type="term" value="P:positive regulation of male gonad development"/>
    <property type="evidence" value="ECO:0007669"/>
    <property type="project" value="Ensembl"/>
</dbReference>
<dbReference type="GO" id="GO:0060903">
    <property type="term" value="P:positive regulation of meiosis I"/>
    <property type="evidence" value="ECO:0007669"/>
    <property type="project" value="Ensembl"/>
</dbReference>
<dbReference type="GO" id="GO:0045840">
    <property type="term" value="P:positive regulation of mitotic nuclear division"/>
    <property type="evidence" value="ECO:0000250"/>
    <property type="project" value="UniProtKB"/>
</dbReference>
<dbReference type="GO" id="GO:0045944">
    <property type="term" value="P:positive regulation of transcription by RNA polymerase II"/>
    <property type="evidence" value="ECO:0000250"/>
    <property type="project" value="UniProtKB"/>
</dbReference>
<dbReference type="GO" id="GO:1900107">
    <property type="term" value="P:regulation of nodal signaling pathway"/>
    <property type="evidence" value="ECO:0007669"/>
    <property type="project" value="Ensembl"/>
</dbReference>
<dbReference type="GO" id="GO:0006357">
    <property type="term" value="P:regulation of transcription by RNA polymerase II"/>
    <property type="evidence" value="ECO:0000318"/>
    <property type="project" value="GO_Central"/>
</dbReference>
<dbReference type="GO" id="GO:0060009">
    <property type="term" value="P:Sertoli cell development"/>
    <property type="evidence" value="ECO:0007669"/>
    <property type="project" value="Ensembl"/>
</dbReference>
<dbReference type="GO" id="GO:0060008">
    <property type="term" value="P:Sertoli cell differentiation"/>
    <property type="evidence" value="ECO:0000250"/>
    <property type="project" value="UniProtKB"/>
</dbReference>
<dbReference type="GO" id="GO:0007548">
    <property type="term" value="P:sex differentiation"/>
    <property type="evidence" value="ECO:0000318"/>
    <property type="project" value="GO_Central"/>
</dbReference>
<dbReference type="GO" id="GO:0007283">
    <property type="term" value="P:spermatogenesis"/>
    <property type="evidence" value="ECO:0007669"/>
    <property type="project" value="Ensembl"/>
</dbReference>
<dbReference type="FunFam" id="4.10.1040.10:FF:000001">
    <property type="entry name" value="doublesex- and mab-3-related transcription factor 1"/>
    <property type="match status" value="1"/>
</dbReference>
<dbReference type="Gene3D" id="4.10.1040.10">
    <property type="entry name" value="DM DNA-binding domain"/>
    <property type="match status" value="1"/>
</dbReference>
<dbReference type="InterPro" id="IPR001275">
    <property type="entry name" value="DM_DNA-bd"/>
</dbReference>
<dbReference type="InterPro" id="IPR036407">
    <property type="entry name" value="DM_DNA-bd_sf"/>
</dbReference>
<dbReference type="InterPro" id="IPR026607">
    <property type="entry name" value="DMRT"/>
</dbReference>
<dbReference type="InterPro" id="IPR022114">
    <property type="entry name" value="DMRT1-like"/>
</dbReference>
<dbReference type="PANTHER" id="PTHR12322">
    <property type="entry name" value="DOUBLESEX AND MAB-3 RELATED TRANSCRIPTION FACTOR DMRT"/>
    <property type="match status" value="1"/>
</dbReference>
<dbReference type="PANTHER" id="PTHR12322:SF70">
    <property type="entry name" value="DOUBLESEX- AND MAB-3-RELATED TRANSCRIPTION FACTOR 1"/>
    <property type="match status" value="1"/>
</dbReference>
<dbReference type="Pfam" id="PF00751">
    <property type="entry name" value="DM"/>
    <property type="match status" value="1"/>
</dbReference>
<dbReference type="Pfam" id="PF12374">
    <property type="entry name" value="Dmrt1"/>
    <property type="match status" value="1"/>
</dbReference>
<dbReference type="SMART" id="SM00301">
    <property type="entry name" value="DM"/>
    <property type="match status" value="1"/>
</dbReference>
<dbReference type="SUPFAM" id="SSF82927">
    <property type="entry name" value="Cysteine-rich DNA binding domain, (DM domain)"/>
    <property type="match status" value="1"/>
</dbReference>
<dbReference type="PROSITE" id="PS40000">
    <property type="entry name" value="DM_1"/>
    <property type="match status" value="1"/>
</dbReference>
<dbReference type="PROSITE" id="PS50809">
    <property type="entry name" value="DM_2"/>
    <property type="match status" value="1"/>
</dbReference>